<organism>
    <name type="scientific">Xenopus tropicalis</name>
    <name type="common">Western clawed frog</name>
    <name type="synonym">Silurana tropicalis</name>
    <dbReference type="NCBI Taxonomy" id="8364"/>
    <lineage>
        <taxon>Eukaryota</taxon>
        <taxon>Metazoa</taxon>
        <taxon>Chordata</taxon>
        <taxon>Craniata</taxon>
        <taxon>Vertebrata</taxon>
        <taxon>Euteleostomi</taxon>
        <taxon>Amphibia</taxon>
        <taxon>Batrachia</taxon>
        <taxon>Anura</taxon>
        <taxon>Pipoidea</taxon>
        <taxon>Pipidae</taxon>
        <taxon>Xenopodinae</taxon>
        <taxon>Xenopus</taxon>
        <taxon>Silurana</taxon>
    </lineage>
</organism>
<accession>Q6NVK9</accession>
<sequence length="462" mass="51162">MDRNPSPPSSDDESAPEGDCIGDTIYSKHWFFSTLTRLIEAVSEDKSQEGQEDEAPGDLDEELEDEICKVWDMSMNEEVALFLQGFNAPEILLGVIAKSKCSRLTEMCVGILGNMSCFLEPCMAISTHQSLGEVLLLLLSDADPPTLLETSRLFLTCLSQADVAGTWVERFRKDPSVRENLCFIMSSSTNVDLLVKVGELLDRLFDMDEDLMLAWIRSDCAPRETSAVTENEDRAAPLEMVSCLLEAAKQLRSESPEGLEIYMHVLQLLTTADTGIQAIVQSPDGGEQTWDFLLDLTCNDLCQPNDPPLIVQEQKGILSSVLAVMSAMFVWRAEQGHKVEKSLPLISSLAQVLENLEECRKKCPESDAREGPDARHDNSHLQILKDVSCEFLSNILSELSKDSVLQGISLGHITERRCQCALRNLLPLYSTSVGTFLAAVGEADRSLADTLRRETPVRAEQT</sequence>
<gene>
    <name type="primary">saal1</name>
</gene>
<proteinExistence type="evidence at transcript level"/>
<protein>
    <recommendedName>
        <fullName>Protein saal1</fullName>
    </recommendedName>
</protein>
<feature type="chain" id="PRO_0000279544" description="Protein saal1">
    <location>
        <begin position="1"/>
        <end position="462"/>
    </location>
</feature>
<feature type="region of interest" description="Disordered" evidence="2">
    <location>
        <begin position="1"/>
        <end position="21"/>
    </location>
</feature>
<dbReference type="EMBL" id="BC067996">
    <property type="protein sequence ID" value="AAH67996.1"/>
    <property type="molecule type" value="mRNA"/>
</dbReference>
<dbReference type="RefSeq" id="NP_998861.2">
    <property type="nucleotide sequence ID" value="NM_213696.2"/>
</dbReference>
<dbReference type="SMR" id="Q6NVK9"/>
<dbReference type="FunCoup" id="Q6NVK9">
    <property type="interactions" value="3190"/>
</dbReference>
<dbReference type="STRING" id="8364.ENSXETP00000016038"/>
<dbReference type="GeneID" id="407882"/>
<dbReference type="KEGG" id="xtr:407882"/>
<dbReference type="CTD" id="113174"/>
<dbReference type="InParanoid" id="Q6NVK9"/>
<dbReference type="OrthoDB" id="2156856at2759"/>
<dbReference type="Proteomes" id="UP000008143">
    <property type="component" value="Chromosome 4"/>
</dbReference>
<dbReference type="GO" id="GO:0005634">
    <property type="term" value="C:nucleus"/>
    <property type="evidence" value="ECO:0007669"/>
    <property type="project" value="UniProtKB-SubCell"/>
</dbReference>
<dbReference type="InterPro" id="IPR016024">
    <property type="entry name" value="ARM-type_fold"/>
</dbReference>
<dbReference type="InterPro" id="IPR052464">
    <property type="entry name" value="Synovial_Prolif_Regulator"/>
</dbReference>
<dbReference type="PANTHER" id="PTHR23424:SF23">
    <property type="entry name" value="PROTEIN SAAL1"/>
    <property type="match status" value="1"/>
</dbReference>
<dbReference type="PANTHER" id="PTHR23424">
    <property type="entry name" value="SERUM AMYLOID A"/>
    <property type="match status" value="1"/>
</dbReference>
<dbReference type="SUPFAM" id="SSF48371">
    <property type="entry name" value="ARM repeat"/>
    <property type="match status" value="1"/>
</dbReference>
<name>SAAL1_XENTR</name>
<comment type="function">
    <text evidence="1">Plays a role in promoting cell proliferation in response to pro-inflammatory stimuli.</text>
</comment>
<comment type="subcellular location">
    <subcellularLocation>
        <location evidence="1">Nucleus</location>
    </subcellularLocation>
</comment>
<comment type="similarity">
    <text evidence="3">Belongs to the SAAL1 family.</text>
</comment>
<reference key="1">
    <citation type="submission" date="2004-03" db="EMBL/GenBank/DDBJ databases">
        <authorList>
            <consortium name="NIH - Xenopus Gene Collection (XGC) project"/>
        </authorList>
    </citation>
    <scope>NUCLEOTIDE SEQUENCE [LARGE SCALE MRNA]</scope>
    <source>
        <tissue>Embryo</tissue>
    </source>
</reference>
<keyword id="KW-0539">Nucleus</keyword>
<keyword id="KW-1185">Reference proteome</keyword>
<evidence type="ECO:0000250" key="1">
    <source>
        <dbReference type="UniProtKB" id="Q96ER3"/>
    </source>
</evidence>
<evidence type="ECO:0000256" key="2">
    <source>
        <dbReference type="SAM" id="MobiDB-lite"/>
    </source>
</evidence>
<evidence type="ECO:0000305" key="3"/>